<comment type="function">
    <text evidence="1">Polyketide synthase responsible for the biosynthesis of secondary metabolites.</text>
</comment>
<comment type="subcellular location">
    <subcellularLocation>
        <location evidence="4">Cytoplasm</location>
    </subcellularLocation>
</comment>
<comment type="tissue specificity">
    <text evidence="3">Expressed in leaves and glandular trichomes.</text>
</comment>
<comment type="similarity">
    <text evidence="4">Belongs to the thiolase-like superfamily. Chalcone/stilbene synthases family.</text>
</comment>
<gene>
    <name type="primary">PKSG2</name>
</gene>
<protein>
    <recommendedName>
        <fullName>Polyketide synthase 2</fullName>
        <ecNumber>2.3.1.-</ecNumber>
    </recommendedName>
</protein>
<accession>F1LKH7</accession>
<keyword id="KW-0012">Acyltransferase</keyword>
<keyword id="KW-0963">Cytoplasm</keyword>
<keyword id="KW-0808">Transferase</keyword>
<name>PKSG2_CANSA</name>
<evidence type="ECO:0000250" key="1"/>
<evidence type="ECO:0000255" key="2">
    <source>
        <dbReference type="PROSITE-ProRule" id="PRU10023"/>
    </source>
</evidence>
<evidence type="ECO:0000269" key="3">
    <source>
    </source>
</evidence>
<evidence type="ECO:0000305" key="4"/>
<reference key="1">
    <citation type="journal article" date="2010" name="Genet. Mol. Biol.">
        <title>In silicio expression analysis of PKS genes isolated from Cannabis sativa L.</title>
        <authorList>
            <person name="Flores-Sanchez I.J."/>
            <person name="Linthorst H.J."/>
            <person name="Verpoorte R."/>
        </authorList>
    </citation>
    <scope>NUCLEOTIDE SEQUENCE [MRNA]</scope>
    <scope>3D-STRUCTURE MODELING</scope>
    <scope>TISSUE SPECIFICITY</scope>
    <source>
        <strain>cv. Skunk</strain>
    </source>
</reference>
<proteinExistence type="evidence at transcript level"/>
<organism>
    <name type="scientific">Cannabis sativa</name>
    <name type="common">Hemp</name>
    <name type="synonym">Marijuana</name>
    <dbReference type="NCBI Taxonomy" id="3483"/>
    <lineage>
        <taxon>Eukaryota</taxon>
        <taxon>Viridiplantae</taxon>
        <taxon>Streptophyta</taxon>
        <taxon>Embryophyta</taxon>
        <taxon>Tracheophyta</taxon>
        <taxon>Spermatophyta</taxon>
        <taxon>Magnoliopsida</taxon>
        <taxon>eudicotyledons</taxon>
        <taxon>Gunneridae</taxon>
        <taxon>Pentapetalae</taxon>
        <taxon>rosids</taxon>
        <taxon>fabids</taxon>
        <taxon>Rosales</taxon>
        <taxon>Cannabaceae</taxon>
        <taxon>Cannabis</taxon>
    </lineage>
</organism>
<feature type="chain" id="PRO_0000421149" description="Polyketide synthase 2">
    <location>
        <begin position="1"/>
        <end position="385"/>
    </location>
</feature>
<feature type="active site" evidence="2">
    <location>
        <position position="157"/>
    </location>
</feature>
<sequence length="385" mass="42610">MNHLRAEGPASVLAIGTANPENILIQDEFPDYYFRVTKSEHMTQLKEKFRKICDKSMIRKRNCFLNEEHLKQNPRLVEHEMQTLDARQDMLVVEVPKLGKDACAKAIKEWGQPKSKITHLIFTSASTTDMPGADYHCAKLLGLSPSVKRVMMYQLGCYGGGTVLRIAKDIAENNKGARVLAVCCDMTACLFRGPSDSNLELLVGQAIFGDGAAAVIVGAEPDESVGERPIFELVSTGQTFLPNSEGTIGGHIREAGLMFDLHKDVPMLISNNIEKCLIEAFTPIGISDWNSIFWITHPGGKAILDKVEEKLHLKSDKFVDSRHVLSEHGNMSSSTVLFVMDELRKRSLEEGKSTTGDGFEWGVLFGFGPGLTVERVVLRSVPINY</sequence>
<dbReference type="EC" id="2.3.1.-"/>
<dbReference type="EMBL" id="EU551164">
    <property type="protein sequence ID" value="ACD76854.1"/>
    <property type="molecule type" value="mRNA"/>
</dbReference>
<dbReference type="SMR" id="F1LKH7"/>
<dbReference type="Proteomes" id="UP000596661">
    <property type="component" value="Unplaced"/>
</dbReference>
<dbReference type="GO" id="GO:0005737">
    <property type="term" value="C:cytoplasm"/>
    <property type="evidence" value="ECO:0007669"/>
    <property type="project" value="UniProtKB-SubCell"/>
</dbReference>
<dbReference type="GO" id="GO:0016747">
    <property type="term" value="F:acyltransferase activity, transferring groups other than amino-acyl groups"/>
    <property type="evidence" value="ECO:0007669"/>
    <property type="project" value="InterPro"/>
</dbReference>
<dbReference type="GO" id="GO:0030639">
    <property type="term" value="P:polyketide biosynthetic process"/>
    <property type="evidence" value="ECO:0007669"/>
    <property type="project" value="TreeGrafter"/>
</dbReference>
<dbReference type="CDD" id="cd00831">
    <property type="entry name" value="CHS_like"/>
    <property type="match status" value="1"/>
</dbReference>
<dbReference type="FunFam" id="3.40.47.10:FF:000014">
    <property type="entry name" value="Chalcone synthase 1"/>
    <property type="match status" value="1"/>
</dbReference>
<dbReference type="FunFam" id="3.40.47.10:FF:000025">
    <property type="entry name" value="Chalcone synthase 2"/>
    <property type="match status" value="1"/>
</dbReference>
<dbReference type="Gene3D" id="3.40.47.10">
    <property type="match status" value="2"/>
</dbReference>
<dbReference type="InterPro" id="IPR012328">
    <property type="entry name" value="Chalcone/stilbene_synt_C"/>
</dbReference>
<dbReference type="InterPro" id="IPR001099">
    <property type="entry name" value="Chalcone/stilbene_synt_N"/>
</dbReference>
<dbReference type="InterPro" id="IPR018088">
    <property type="entry name" value="Chalcone/stilbene_synthase_AS"/>
</dbReference>
<dbReference type="InterPro" id="IPR011141">
    <property type="entry name" value="Polyketide_synthase_type-III"/>
</dbReference>
<dbReference type="InterPro" id="IPR016039">
    <property type="entry name" value="Thiolase-like"/>
</dbReference>
<dbReference type="PANTHER" id="PTHR11877:SF14">
    <property type="entry name" value="CHALCONE SYNTHASE"/>
    <property type="match status" value="1"/>
</dbReference>
<dbReference type="PANTHER" id="PTHR11877">
    <property type="entry name" value="HYDROXYMETHYLGLUTARYL-COA SYNTHASE"/>
    <property type="match status" value="1"/>
</dbReference>
<dbReference type="Pfam" id="PF02797">
    <property type="entry name" value="Chal_sti_synt_C"/>
    <property type="match status" value="1"/>
</dbReference>
<dbReference type="Pfam" id="PF00195">
    <property type="entry name" value="Chal_sti_synt_N"/>
    <property type="match status" value="1"/>
</dbReference>
<dbReference type="PIRSF" id="PIRSF000451">
    <property type="entry name" value="PKS_III"/>
    <property type="match status" value="1"/>
</dbReference>
<dbReference type="SUPFAM" id="SSF53901">
    <property type="entry name" value="Thiolase-like"/>
    <property type="match status" value="2"/>
</dbReference>
<dbReference type="PROSITE" id="PS00441">
    <property type="entry name" value="CHALCONE_SYNTH"/>
    <property type="match status" value="1"/>
</dbReference>